<name>HIS3_METS3</name>
<evidence type="ECO:0000255" key="1">
    <source>
        <dbReference type="HAMAP-Rule" id="MF_01021"/>
    </source>
</evidence>
<protein>
    <recommendedName>
        <fullName evidence="1">Phosphoribosyl-AMP cyclohydrolase</fullName>
        <shortName evidence="1">PRA-CH</shortName>
        <ecNumber evidence="1">3.5.4.19</ecNumber>
    </recommendedName>
</protein>
<reference key="1">
    <citation type="journal article" date="2007" name="Proc. Natl. Acad. Sci. U.S.A.">
        <title>Genomic and metabolic adaptations of Methanobrevibacter smithii to the human gut.</title>
        <authorList>
            <person name="Samuel B.S."/>
            <person name="Hansen E.E."/>
            <person name="Manchester J.K."/>
            <person name="Coutinho P.M."/>
            <person name="Henrissat B."/>
            <person name="Fulton R."/>
            <person name="Latreille P."/>
            <person name="Kim K."/>
            <person name="Wilson R.K."/>
            <person name="Gordon J.I."/>
        </authorList>
    </citation>
    <scope>NUCLEOTIDE SEQUENCE [LARGE SCALE GENOMIC DNA]</scope>
    <source>
        <strain>ATCC 35061 / DSM 861 / OCM 144 / PS</strain>
    </source>
</reference>
<comment type="function">
    <text evidence="1">Catalyzes the hydrolysis of the adenine ring of phosphoribosyl-AMP.</text>
</comment>
<comment type="catalytic activity">
    <reaction evidence="1">
        <text>1-(5-phospho-beta-D-ribosyl)-5'-AMP + H2O = 1-(5-phospho-beta-D-ribosyl)-5-[(5-phospho-beta-D-ribosylamino)methylideneamino]imidazole-4-carboxamide</text>
        <dbReference type="Rhea" id="RHEA:20049"/>
        <dbReference type="ChEBI" id="CHEBI:15377"/>
        <dbReference type="ChEBI" id="CHEBI:58435"/>
        <dbReference type="ChEBI" id="CHEBI:59457"/>
        <dbReference type="EC" id="3.5.4.19"/>
    </reaction>
</comment>
<comment type="cofactor">
    <cofactor evidence="1">
        <name>Mg(2+)</name>
        <dbReference type="ChEBI" id="CHEBI:18420"/>
    </cofactor>
    <text evidence="1">Binds 1 Mg(2+) ion per subunit.</text>
</comment>
<comment type="cofactor">
    <cofactor evidence="1">
        <name>Zn(2+)</name>
        <dbReference type="ChEBI" id="CHEBI:29105"/>
    </cofactor>
    <text evidence="1">Binds 1 zinc ion per subunit.</text>
</comment>
<comment type="pathway">
    <text evidence="1">Amino-acid biosynthesis; L-histidine biosynthesis; L-histidine from 5-phospho-alpha-D-ribose 1-diphosphate: step 3/9.</text>
</comment>
<comment type="subunit">
    <text evidence="1">Homodimer.</text>
</comment>
<comment type="subcellular location">
    <subcellularLocation>
        <location evidence="1">Cytoplasm</location>
    </subcellularLocation>
</comment>
<comment type="similarity">
    <text evidence="1">Belongs to the PRA-CH family.</text>
</comment>
<keyword id="KW-0028">Amino-acid biosynthesis</keyword>
<keyword id="KW-0963">Cytoplasm</keyword>
<keyword id="KW-0368">Histidine biosynthesis</keyword>
<keyword id="KW-0378">Hydrolase</keyword>
<keyword id="KW-0460">Magnesium</keyword>
<keyword id="KW-0479">Metal-binding</keyword>
<keyword id="KW-0862">Zinc</keyword>
<accession>A5UMF9</accession>
<proteinExistence type="inferred from homology"/>
<dbReference type="EC" id="3.5.4.19" evidence="1"/>
<dbReference type="EMBL" id="CP000678">
    <property type="protein sequence ID" value="ABQ87387.1"/>
    <property type="molecule type" value="Genomic_DNA"/>
</dbReference>
<dbReference type="RefSeq" id="WP_004032752.1">
    <property type="nucleotide sequence ID" value="NZ_CP117965.1"/>
</dbReference>
<dbReference type="SMR" id="A5UMF9"/>
<dbReference type="STRING" id="420247.Msm_1182"/>
<dbReference type="EnsemblBacteria" id="ABQ87387">
    <property type="protein sequence ID" value="ABQ87387"/>
    <property type="gene ID" value="Msm_1182"/>
</dbReference>
<dbReference type="GeneID" id="78817833"/>
<dbReference type="KEGG" id="msi:Msm_1182"/>
<dbReference type="PATRIC" id="fig|420247.28.peg.1181"/>
<dbReference type="eggNOG" id="arCOG02676">
    <property type="taxonomic scope" value="Archaea"/>
</dbReference>
<dbReference type="HOGENOM" id="CLU_048577_5_0_2"/>
<dbReference type="UniPathway" id="UPA00031">
    <property type="reaction ID" value="UER00008"/>
</dbReference>
<dbReference type="Proteomes" id="UP000001992">
    <property type="component" value="Chromosome"/>
</dbReference>
<dbReference type="GO" id="GO:0005737">
    <property type="term" value="C:cytoplasm"/>
    <property type="evidence" value="ECO:0007669"/>
    <property type="project" value="UniProtKB-SubCell"/>
</dbReference>
<dbReference type="GO" id="GO:0000287">
    <property type="term" value="F:magnesium ion binding"/>
    <property type="evidence" value="ECO:0007669"/>
    <property type="project" value="UniProtKB-UniRule"/>
</dbReference>
<dbReference type="GO" id="GO:0004635">
    <property type="term" value="F:phosphoribosyl-AMP cyclohydrolase activity"/>
    <property type="evidence" value="ECO:0007669"/>
    <property type="project" value="UniProtKB-UniRule"/>
</dbReference>
<dbReference type="GO" id="GO:0008270">
    <property type="term" value="F:zinc ion binding"/>
    <property type="evidence" value="ECO:0007669"/>
    <property type="project" value="UniProtKB-UniRule"/>
</dbReference>
<dbReference type="GO" id="GO:0000105">
    <property type="term" value="P:L-histidine biosynthetic process"/>
    <property type="evidence" value="ECO:0007669"/>
    <property type="project" value="UniProtKB-UniRule"/>
</dbReference>
<dbReference type="FunFam" id="3.10.20.810:FF:000001">
    <property type="entry name" value="Histidine biosynthesis bifunctional protein HisIE"/>
    <property type="match status" value="1"/>
</dbReference>
<dbReference type="Gene3D" id="3.10.20.810">
    <property type="entry name" value="Phosphoribosyl-AMP cyclohydrolase"/>
    <property type="match status" value="1"/>
</dbReference>
<dbReference type="HAMAP" id="MF_01021">
    <property type="entry name" value="HisI"/>
    <property type="match status" value="1"/>
</dbReference>
<dbReference type="InterPro" id="IPR026660">
    <property type="entry name" value="PRA-CH"/>
</dbReference>
<dbReference type="InterPro" id="IPR002496">
    <property type="entry name" value="PRib_AMP_CycHydrolase_dom"/>
</dbReference>
<dbReference type="InterPro" id="IPR038019">
    <property type="entry name" value="PRib_AMP_CycHydrolase_sf"/>
</dbReference>
<dbReference type="NCBIfam" id="NF000768">
    <property type="entry name" value="PRK00051.1"/>
    <property type="match status" value="1"/>
</dbReference>
<dbReference type="PANTHER" id="PTHR42945">
    <property type="entry name" value="HISTIDINE BIOSYNTHESIS BIFUNCTIONAL PROTEIN"/>
    <property type="match status" value="1"/>
</dbReference>
<dbReference type="PANTHER" id="PTHR42945:SF1">
    <property type="entry name" value="HISTIDINE BIOSYNTHESIS BIFUNCTIONAL PROTEIN HIS7"/>
    <property type="match status" value="1"/>
</dbReference>
<dbReference type="Pfam" id="PF01502">
    <property type="entry name" value="PRA-CH"/>
    <property type="match status" value="1"/>
</dbReference>
<dbReference type="SUPFAM" id="SSF141734">
    <property type="entry name" value="HisI-like"/>
    <property type="match status" value="1"/>
</dbReference>
<organism>
    <name type="scientific">Methanobrevibacter smithii (strain ATCC 35061 / DSM 861 / OCM 144 / PS)</name>
    <dbReference type="NCBI Taxonomy" id="420247"/>
    <lineage>
        <taxon>Archaea</taxon>
        <taxon>Methanobacteriati</taxon>
        <taxon>Methanobacteriota</taxon>
        <taxon>Methanomada group</taxon>
        <taxon>Methanobacteria</taxon>
        <taxon>Methanobacteriales</taxon>
        <taxon>Methanobacteriaceae</taxon>
        <taxon>Methanobrevibacter</taxon>
    </lineage>
</organism>
<feature type="chain" id="PRO_0000319726" description="Phosphoribosyl-AMP cyclohydrolase">
    <location>
        <begin position="1"/>
        <end position="132"/>
    </location>
</feature>
<feature type="binding site" evidence="1">
    <location>
        <position position="76"/>
    </location>
    <ligand>
        <name>Mg(2+)</name>
        <dbReference type="ChEBI" id="CHEBI:18420"/>
    </ligand>
</feature>
<feature type="binding site" evidence="1">
    <location>
        <position position="77"/>
    </location>
    <ligand>
        <name>Zn(2+)</name>
        <dbReference type="ChEBI" id="CHEBI:29105"/>
        <note>ligand shared between dimeric partners</note>
    </ligand>
</feature>
<feature type="binding site" evidence="1">
    <location>
        <position position="78"/>
    </location>
    <ligand>
        <name>Mg(2+)</name>
        <dbReference type="ChEBI" id="CHEBI:18420"/>
    </ligand>
</feature>
<feature type="binding site" evidence="1">
    <location>
        <position position="80"/>
    </location>
    <ligand>
        <name>Mg(2+)</name>
        <dbReference type="ChEBI" id="CHEBI:18420"/>
    </ligand>
</feature>
<feature type="binding site" evidence="1">
    <location>
        <position position="93"/>
    </location>
    <ligand>
        <name>Zn(2+)</name>
        <dbReference type="ChEBI" id="CHEBI:29105"/>
        <note>ligand shared between dimeric partners</note>
    </ligand>
</feature>
<feature type="binding site" evidence="1">
    <location>
        <position position="100"/>
    </location>
    <ligand>
        <name>Zn(2+)</name>
        <dbReference type="ChEBI" id="CHEBI:29105"/>
        <note>ligand shared between dimeric partners</note>
    </ligand>
</feature>
<sequence>MEINFRHEINGQKVITAIAQDWKTGQILMVANMNKDALQKTIETGKAHYWSTSRNSQWLKGESSGHTQEVKEILVDCDMDAVVLKVKQNGAACHEGYFSCFFRKLNTKNIENFNEEDLETILEKVFNPDDVY</sequence>
<gene>
    <name evidence="1" type="primary">hisI</name>
    <name type="ordered locus">Msm_1182</name>
</gene>